<dbReference type="EC" id="2.4.2.1" evidence="1"/>
<dbReference type="EC" id="2.4.2.2" evidence="1"/>
<dbReference type="EMBL" id="CP000926">
    <property type="protein sequence ID" value="ABY99704.1"/>
    <property type="molecule type" value="Genomic_DNA"/>
</dbReference>
<dbReference type="RefSeq" id="WP_012273401.1">
    <property type="nucleotide sequence ID" value="NC_010322.1"/>
</dbReference>
<dbReference type="SMR" id="B0KPU9"/>
<dbReference type="KEGG" id="ppg:PputGB1_3814"/>
<dbReference type="eggNOG" id="COG3123">
    <property type="taxonomic scope" value="Bacteria"/>
</dbReference>
<dbReference type="HOGENOM" id="CLU_157874_0_0_6"/>
<dbReference type="Proteomes" id="UP000002157">
    <property type="component" value="Chromosome"/>
</dbReference>
<dbReference type="GO" id="GO:0005829">
    <property type="term" value="C:cytosol"/>
    <property type="evidence" value="ECO:0007669"/>
    <property type="project" value="TreeGrafter"/>
</dbReference>
<dbReference type="GO" id="GO:0047975">
    <property type="term" value="F:guanosine phosphorylase activity"/>
    <property type="evidence" value="ECO:0007669"/>
    <property type="project" value="UniProtKB-EC"/>
</dbReference>
<dbReference type="GO" id="GO:0004731">
    <property type="term" value="F:purine-nucleoside phosphorylase activity"/>
    <property type="evidence" value="ECO:0007669"/>
    <property type="project" value="UniProtKB-UniRule"/>
</dbReference>
<dbReference type="GO" id="GO:0009032">
    <property type="term" value="F:thymidine phosphorylase activity"/>
    <property type="evidence" value="ECO:0007669"/>
    <property type="project" value="UniProtKB-EC"/>
</dbReference>
<dbReference type="GO" id="GO:0004850">
    <property type="term" value="F:uridine phosphorylase activity"/>
    <property type="evidence" value="ECO:0007669"/>
    <property type="project" value="UniProtKB-EC"/>
</dbReference>
<dbReference type="CDD" id="cd20296">
    <property type="entry name" value="cupin_PpnP-like"/>
    <property type="match status" value="1"/>
</dbReference>
<dbReference type="FunFam" id="2.60.120.10:FF:000016">
    <property type="entry name" value="Pyrimidine/purine nucleoside phosphorylase"/>
    <property type="match status" value="1"/>
</dbReference>
<dbReference type="Gene3D" id="2.60.120.10">
    <property type="entry name" value="Jelly Rolls"/>
    <property type="match status" value="1"/>
</dbReference>
<dbReference type="HAMAP" id="MF_01537">
    <property type="entry name" value="Nucleos_phosphorylase_PpnP"/>
    <property type="match status" value="1"/>
</dbReference>
<dbReference type="InterPro" id="IPR009664">
    <property type="entry name" value="Ppnp"/>
</dbReference>
<dbReference type="InterPro" id="IPR014710">
    <property type="entry name" value="RmlC-like_jellyroll"/>
</dbReference>
<dbReference type="InterPro" id="IPR011051">
    <property type="entry name" value="RmlC_Cupin_sf"/>
</dbReference>
<dbReference type="PANTHER" id="PTHR36540">
    <property type="entry name" value="PYRIMIDINE/PURINE NUCLEOSIDE PHOSPHORYLASE"/>
    <property type="match status" value="1"/>
</dbReference>
<dbReference type="PANTHER" id="PTHR36540:SF1">
    <property type="entry name" value="PYRIMIDINE_PURINE NUCLEOSIDE PHOSPHORYLASE"/>
    <property type="match status" value="1"/>
</dbReference>
<dbReference type="Pfam" id="PF06865">
    <property type="entry name" value="Ppnp"/>
    <property type="match status" value="1"/>
</dbReference>
<dbReference type="SUPFAM" id="SSF51182">
    <property type="entry name" value="RmlC-like cupins"/>
    <property type="match status" value="1"/>
</dbReference>
<reference key="1">
    <citation type="submission" date="2008-01" db="EMBL/GenBank/DDBJ databases">
        <title>Complete sequence of Pseudomonas putida GB-1.</title>
        <authorList>
            <consortium name="US DOE Joint Genome Institute"/>
            <person name="Copeland A."/>
            <person name="Lucas S."/>
            <person name="Lapidus A."/>
            <person name="Barry K."/>
            <person name="Glavina del Rio T."/>
            <person name="Dalin E."/>
            <person name="Tice H."/>
            <person name="Pitluck S."/>
            <person name="Bruce D."/>
            <person name="Goodwin L."/>
            <person name="Chertkov O."/>
            <person name="Brettin T."/>
            <person name="Detter J.C."/>
            <person name="Han C."/>
            <person name="Kuske C.R."/>
            <person name="Schmutz J."/>
            <person name="Larimer F."/>
            <person name="Land M."/>
            <person name="Hauser L."/>
            <person name="Kyrpides N."/>
            <person name="Kim E."/>
            <person name="McCarthy J.K."/>
            <person name="Richardson P."/>
        </authorList>
    </citation>
    <scope>NUCLEOTIDE SEQUENCE [LARGE SCALE GENOMIC DNA]</scope>
    <source>
        <strain>GB-1</strain>
    </source>
</reference>
<feature type="chain" id="PRO_1000087610" description="Pyrimidine/purine nucleoside phosphorylase">
    <location>
        <begin position="1"/>
        <end position="94"/>
    </location>
</feature>
<organism>
    <name type="scientific">Pseudomonas putida (strain GB-1)</name>
    <dbReference type="NCBI Taxonomy" id="76869"/>
    <lineage>
        <taxon>Bacteria</taxon>
        <taxon>Pseudomonadati</taxon>
        <taxon>Pseudomonadota</taxon>
        <taxon>Gammaproteobacteria</taxon>
        <taxon>Pseudomonadales</taxon>
        <taxon>Pseudomonadaceae</taxon>
        <taxon>Pseudomonas</taxon>
    </lineage>
</organism>
<keyword id="KW-0328">Glycosyltransferase</keyword>
<keyword id="KW-0808">Transferase</keyword>
<comment type="function">
    <text evidence="1">Catalyzes the phosphorolysis of diverse nucleosides, yielding D-ribose 1-phosphate and the respective free bases. Can use uridine, adenosine, guanosine, cytidine, thymidine, inosine and xanthosine as substrates. Also catalyzes the reverse reactions.</text>
</comment>
<comment type="catalytic activity">
    <reaction evidence="1">
        <text>a purine D-ribonucleoside + phosphate = a purine nucleobase + alpha-D-ribose 1-phosphate</text>
        <dbReference type="Rhea" id="RHEA:19805"/>
        <dbReference type="ChEBI" id="CHEBI:26386"/>
        <dbReference type="ChEBI" id="CHEBI:43474"/>
        <dbReference type="ChEBI" id="CHEBI:57720"/>
        <dbReference type="ChEBI" id="CHEBI:142355"/>
        <dbReference type="EC" id="2.4.2.1"/>
    </reaction>
</comment>
<comment type="catalytic activity">
    <reaction evidence="1">
        <text>adenosine + phosphate = alpha-D-ribose 1-phosphate + adenine</text>
        <dbReference type="Rhea" id="RHEA:27642"/>
        <dbReference type="ChEBI" id="CHEBI:16335"/>
        <dbReference type="ChEBI" id="CHEBI:16708"/>
        <dbReference type="ChEBI" id="CHEBI:43474"/>
        <dbReference type="ChEBI" id="CHEBI:57720"/>
        <dbReference type="EC" id="2.4.2.1"/>
    </reaction>
</comment>
<comment type="catalytic activity">
    <reaction evidence="1">
        <text>cytidine + phosphate = cytosine + alpha-D-ribose 1-phosphate</text>
        <dbReference type="Rhea" id="RHEA:52540"/>
        <dbReference type="ChEBI" id="CHEBI:16040"/>
        <dbReference type="ChEBI" id="CHEBI:17562"/>
        <dbReference type="ChEBI" id="CHEBI:43474"/>
        <dbReference type="ChEBI" id="CHEBI:57720"/>
        <dbReference type="EC" id="2.4.2.2"/>
    </reaction>
</comment>
<comment type="catalytic activity">
    <reaction evidence="1">
        <text>guanosine + phosphate = alpha-D-ribose 1-phosphate + guanine</text>
        <dbReference type="Rhea" id="RHEA:13233"/>
        <dbReference type="ChEBI" id="CHEBI:16235"/>
        <dbReference type="ChEBI" id="CHEBI:16750"/>
        <dbReference type="ChEBI" id="CHEBI:43474"/>
        <dbReference type="ChEBI" id="CHEBI:57720"/>
        <dbReference type="EC" id="2.4.2.1"/>
    </reaction>
</comment>
<comment type="catalytic activity">
    <reaction evidence="1">
        <text>inosine + phosphate = alpha-D-ribose 1-phosphate + hypoxanthine</text>
        <dbReference type="Rhea" id="RHEA:27646"/>
        <dbReference type="ChEBI" id="CHEBI:17368"/>
        <dbReference type="ChEBI" id="CHEBI:17596"/>
        <dbReference type="ChEBI" id="CHEBI:43474"/>
        <dbReference type="ChEBI" id="CHEBI:57720"/>
        <dbReference type="EC" id="2.4.2.1"/>
    </reaction>
</comment>
<comment type="catalytic activity">
    <reaction evidence="1">
        <text>thymidine + phosphate = 2-deoxy-alpha-D-ribose 1-phosphate + thymine</text>
        <dbReference type="Rhea" id="RHEA:16037"/>
        <dbReference type="ChEBI" id="CHEBI:17748"/>
        <dbReference type="ChEBI" id="CHEBI:17821"/>
        <dbReference type="ChEBI" id="CHEBI:43474"/>
        <dbReference type="ChEBI" id="CHEBI:57259"/>
        <dbReference type="EC" id="2.4.2.2"/>
    </reaction>
</comment>
<comment type="catalytic activity">
    <reaction evidence="1">
        <text>uridine + phosphate = alpha-D-ribose 1-phosphate + uracil</text>
        <dbReference type="Rhea" id="RHEA:24388"/>
        <dbReference type="ChEBI" id="CHEBI:16704"/>
        <dbReference type="ChEBI" id="CHEBI:17568"/>
        <dbReference type="ChEBI" id="CHEBI:43474"/>
        <dbReference type="ChEBI" id="CHEBI:57720"/>
        <dbReference type="EC" id="2.4.2.2"/>
    </reaction>
</comment>
<comment type="catalytic activity">
    <reaction evidence="1">
        <text>xanthosine + phosphate = alpha-D-ribose 1-phosphate + xanthine</text>
        <dbReference type="Rhea" id="RHEA:27638"/>
        <dbReference type="ChEBI" id="CHEBI:17712"/>
        <dbReference type="ChEBI" id="CHEBI:18107"/>
        <dbReference type="ChEBI" id="CHEBI:43474"/>
        <dbReference type="ChEBI" id="CHEBI:57720"/>
        <dbReference type="EC" id="2.4.2.1"/>
    </reaction>
</comment>
<comment type="similarity">
    <text evidence="1">Belongs to the nucleoside phosphorylase PpnP family.</text>
</comment>
<evidence type="ECO:0000255" key="1">
    <source>
        <dbReference type="HAMAP-Rule" id="MF_01537"/>
    </source>
</evidence>
<proteinExistence type="inferred from homology"/>
<accession>B0KPU9</accession>
<sequence length="94" mass="10307">MFQVNEYFNGTVKSIAFAGEEGPATVGVMAPGEYEFGTAKREIMHVVSGALTVKLPGSDNWETFNAGDKFNVAADSKFQLKVKVDTAYLCEYRD</sequence>
<protein>
    <recommendedName>
        <fullName evidence="1">Pyrimidine/purine nucleoside phosphorylase</fullName>
        <ecNumber evidence="1">2.4.2.1</ecNumber>
        <ecNumber evidence="1">2.4.2.2</ecNumber>
    </recommendedName>
    <alternativeName>
        <fullName evidence="1">Adenosine phosphorylase</fullName>
    </alternativeName>
    <alternativeName>
        <fullName evidence="1">Cytidine phosphorylase</fullName>
    </alternativeName>
    <alternativeName>
        <fullName evidence="1">Guanosine phosphorylase</fullName>
    </alternativeName>
    <alternativeName>
        <fullName evidence="1">Inosine phosphorylase</fullName>
    </alternativeName>
    <alternativeName>
        <fullName evidence="1">Thymidine phosphorylase</fullName>
    </alternativeName>
    <alternativeName>
        <fullName evidence="1">Uridine phosphorylase</fullName>
    </alternativeName>
    <alternativeName>
        <fullName evidence="1">Xanthosine phosphorylase</fullName>
    </alternativeName>
</protein>
<gene>
    <name evidence="1" type="primary">ppnP</name>
    <name type="ordered locus">PputGB1_3814</name>
</gene>
<name>PPNP_PSEPG</name>